<dbReference type="EC" id="2.7.7.59" evidence="1"/>
<dbReference type="EC" id="3.1.4.-" evidence="1"/>
<dbReference type="EMBL" id="CP000036">
    <property type="protein sequence ID" value="ABB64885.1"/>
    <property type="molecule type" value="Genomic_DNA"/>
</dbReference>
<dbReference type="RefSeq" id="WP_001094571.1">
    <property type="nucleotide sequence ID" value="NC_007613.1"/>
</dbReference>
<dbReference type="SMR" id="Q325X3"/>
<dbReference type="GeneID" id="75202020"/>
<dbReference type="KEGG" id="sbo:SBO_0155"/>
<dbReference type="HOGENOM" id="CLU_012833_0_0_6"/>
<dbReference type="Proteomes" id="UP000007067">
    <property type="component" value="Chromosome"/>
</dbReference>
<dbReference type="GO" id="GO:0008773">
    <property type="term" value="F:[protein-PII] uridylyltransferase activity"/>
    <property type="evidence" value="ECO:0007669"/>
    <property type="project" value="UniProtKB-UniRule"/>
</dbReference>
<dbReference type="GO" id="GO:0008081">
    <property type="term" value="F:phosphoric diester hydrolase activity"/>
    <property type="evidence" value="ECO:0007669"/>
    <property type="project" value="UniProtKB-UniRule"/>
</dbReference>
<dbReference type="GO" id="GO:0006808">
    <property type="term" value="P:regulation of nitrogen utilization"/>
    <property type="evidence" value="ECO:0007669"/>
    <property type="project" value="UniProtKB-UniRule"/>
</dbReference>
<dbReference type="CDD" id="cd04899">
    <property type="entry name" value="ACT_ACR-UUR-like_2"/>
    <property type="match status" value="1"/>
</dbReference>
<dbReference type="CDD" id="cd04900">
    <property type="entry name" value="ACT_UUR-like_1"/>
    <property type="match status" value="1"/>
</dbReference>
<dbReference type="CDD" id="cd00077">
    <property type="entry name" value="HDc"/>
    <property type="match status" value="1"/>
</dbReference>
<dbReference type="CDD" id="cd05401">
    <property type="entry name" value="NT_GlnE_GlnD_like"/>
    <property type="match status" value="1"/>
</dbReference>
<dbReference type="FunFam" id="1.10.3210.10:FF:000005">
    <property type="entry name" value="Bifunctional uridylyltransferase/uridylyl-removing enzyme"/>
    <property type="match status" value="1"/>
</dbReference>
<dbReference type="Gene3D" id="1.10.3210.10">
    <property type="entry name" value="Hypothetical protein af1432"/>
    <property type="match status" value="1"/>
</dbReference>
<dbReference type="HAMAP" id="MF_00277">
    <property type="entry name" value="PII_uridylyl_transf"/>
    <property type="match status" value="1"/>
</dbReference>
<dbReference type="InterPro" id="IPR045865">
    <property type="entry name" value="ACT-like_dom_sf"/>
</dbReference>
<dbReference type="InterPro" id="IPR002912">
    <property type="entry name" value="ACT_dom"/>
</dbReference>
<dbReference type="InterPro" id="IPR003607">
    <property type="entry name" value="HD/PDEase_dom"/>
</dbReference>
<dbReference type="InterPro" id="IPR006674">
    <property type="entry name" value="HD_domain"/>
</dbReference>
<dbReference type="InterPro" id="IPR043519">
    <property type="entry name" value="NT_sf"/>
</dbReference>
<dbReference type="InterPro" id="IPR013546">
    <property type="entry name" value="PII_UdlTrfase/GS_AdlTrfase"/>
</dbReference>
<dbReference type="InterPro" id="IPR002934">
    <property type="entry name" value="Polymerase_NTP_transf_dom"/>
</dbReference>
<dbReference type="InterPro" id="IPR010043">
    <property type="entry name" value="UTase/UR"/>
</dbReference>
<dbReference type="NCBIfam" id="NF002487">
    <property type="entry name" value="PRK01759.1"/>
    <property type="match status" value="1"/>
</dbReference>
<dbReference type="NCBIfam" id="NF003448">
    <property type="entry name" value="PRK05007.1"/>
    <property type="match status" value="1"/>
</dbReference>
<dbReference type="NCBIfam" id="TIGR01693">
    <property type="entry name" value="UTase_glnD"/>
    <property type="match status" value="1"/>
</dbReference>
<dbReference type="PANTHER" id="PTHR47320">
    <property type="entry name" value="BIFUNCTIONAL URIDYLYLTRANSFERASE/URIDYLYL-REMOVING ENZYME"/>
    <property type="match status" value="1"/>
</dbReference>
<dbReference type="PANTHER" id="PTHR47320:SF1">
    <property type="entry name" value="BIFUNCTIONAL URIDYLYLTRANSFERASE_URIDYLYL-REMOVING ENZYME"/>
    <property type="match status" value="1"/>
</dbReference>
<dbReference type="Pfam" id="PF01842">
    <property type="entry name" value="ACT"/>
    <property type="match status" value="2"/>
</dbReference>
<dbReference type="Pfam" id="PF08335">
    <property type="entry name" value="GlnD_UR_UTase"/>
    <property type="match status" value="1"/>
</dbReference>
<dbReference type="Pfam" id="PF01966">
    <property type="entry name" value="HD"/>
    <property type="match status" value="1"/>
</dbReference>
<dbReference type="Pfam" id="PF01909">
    <property type="entry name" value="NTP_transf_2"/>
    <property type="match status" value="1"/>
</dbReference>
<dbReference type="PIRSF" id="PIRSF006288">
    <property type="entry name" value="PII_uridyltransf"/>
    <property type="match status" value="1"/>
</dbReference>
<dbReference type="SMART" id="SM00471">
    <property type="entry name" value="HDc"/>
    <property type="match status" value="1"/>
</dbReference>
<dbReference type="SUPFAM" id="SSF55021">
    <property type="entry name" value="ACT-like"/>
    <property type="match status" value="2"/>
</dbReference>
<dbReference type="SUPFAM" id="SSF109604">
    <property type="entry name" value="HD-domain/PDEase-like"/>
    <property type="match status" value="1"/>
</dbReference>
<dbReference type="SUPFAM" id="SSF81301">
    <property type="entry name" value="Nucleotidyltransferase"/>
    <property type="match status" value="1"/>
</dbReference>
<dbReference type="SUPFAM" id="SSF81593">
    <property type="entry name" value="Nucleotidyltransferase substrate binding subunit/domain"/>
    <property type="match status" value="1"/>
</dbReference>
<dbReference type="PROSITE" id="PS51671">
    <property type="entry name" value="ACT"/>
    <property type="match status" value="2"/>
</dbReference>
<dbReference type="PROSITE" id="PS51831">
    <property type="entry name" value="HD"/>
    <property type="match status" value="1"/>
</dbReference>
<comment type="function">
    <text evidence="1">Modifies, by uridylylation and deuridylylation, the PII regulatory proteins (GlnB and homologs), in response to the nitrogen status of the cell that GlnD senses through the glutamine level. Under low glutamine levels, catalyzes the conversion of the PII proteins and UTP to PII-UMP and PPi, while under higher glutamine levels, GlnD hydrolyzes PII-UMP to PII and UMP (deuridylylation). Thus, controls uridylylation state and activity of the PII proteins, and plays an important role in the regulation of nitrogen assimilation and metabolism.</text>
</comment>
<comment type="catalytic activity">
    <reaction evidence="1">
        <text>[protein-PII]-L-tyrosine + UTP = [protein-PII]-uridylyl-L-tyrosine + diphosphate</text>
        <dbReference type="Rhea" id="RHEA:13673"/>
        <dbReference type="Rhea" id="RHEA-COMP:12147"/>
        <dbReference type="Rhea" id="RHEA-COMP:12148"/>
        <dbReference type="ChEBI" id="CHEBI:33019"/>
        <dbReference type="ChEBI" id="CHEBI:46398"/>
        <dbReference type="ChEBI" id="CHEBI:46858"/>
        <dbReference type="ChEBI" id="CHEBI:90602"/>
        <dbReference type="EC" id="2.7.7.59"/>
    </reaction>
</comment>
<comment type="catalytic activity">
    <reaction evidence="1">
        <text>[protein-PII]-uridylyl-L-tyrosine + H2O = [protein-PII]-L-tyrosine + UMP + H(+)</text>
        <dbReference type="Rhea" id="RHEA:48600"/>
        <dbReference type="Rhea" id="RHEA-COMP:12147"/>
        <dbReference type="Rhea" id="RHEA-COMP:12148"/>
        <dbReference type="ChEBI" id="CHEBI:15377"/>
        <dbReference type="ChEBI" id="CHEBI:15378"/>
        <dbReference type="ChEBI" id="CHEBI:46858"/>
        <dbReference type="ChEBI" id="CHEBI:57865"/>
        <dbReference type="ChEBI" id="CHEBI:90602"/>
    </reaction>
</comment>
<comment type="cofactor">
    <cofactor evidence="1">
        <name>Mg(2+)</name>
        <dbReference type="ChEBI" id="CHEBI:18420"/>
    </cofactor>
</comment>
<comment type="activity regulation">
    <text evidence="1">Uridylyltransferase (UTase) activity is inhibited by glutamine, while glutamine activates uridylyl-removing (UR) activity.</text>
</comment>
<comment type="domain">
    <text evidence="1">Has four distinct domains: an N-terminal nucleotidyltransferase (NT) domain responsible for UTase activity, a central HD domain that encodes UR activity, and two C-terminal ACT domains that seem to have a role in glutamine sensing.</text>
</comment>
<comment type="similarity">
    <text evidence="1">Belongs to the GlnD family.</text>
</comment>
<reference key="1">
    <citation type="journal article" date="2005" name="Nucleic Acids Res.">
        <title>Genome dynamics and diversity of Shigella species, the etiologic agents of bacillary dysentery.</title>
        <authorList>
            <person name="Yang F."/>
            <person name="Yang J."/>
            <person name="Zhang X."/>
            <person name="Chen L."/>
            <person name="Jiang Y."/>
            <person name="Yan Y."/>
            <person name="Tang X."/>
            <person name="Wang J."/>
            <person name="Xiong Z."/>
            <person name="Dong J."/>
            <person name="Xue Y."/>
            <person name="Zhu Y."/>
            <person name="Xu X."/>
            <person name="Sun L."/>
            <person name="Chen S."/>
            <person name="Nie H."/>
            <person name="Peng J."/>
            <person name="Xu J."/>
            <person name="Wang Y."/>
            <person name="Yuan Z."/>
            <person name="Wen Y."/>
            <person name="Yao Z."/>
            <person name="Shen Y."/>
            <person name="Qiang B."/>
            <person name="Hou Y."/>
            <person name="Yu J."/>
            <person name="Jin Q."/>
        </authorList>
    </citation>
    <scope>NUCLEOTIDE SEQUENCE [LARGE SCALE GENOMIC DNA]</scope>
    <source>
        <strain>Sb227</strain>
    </source>
</reference>
<gene>
    <name evidence="1" type="primary">glnD</name>
    <name type="ordered locus">SBO_0155</name>
</gene>
<name>GLND_SHIBS</name>
<protein>
    <recommendedName>
        <fullName evidence="1">Bifunctional uridylyltransferase/uridylyl-removing enzyme</fullName>
        <shortName evidence="1">UTase/UR</shortName>
    </recommendedName>
    <alternativeName>
        <fullName evidence="1">Bifunctional [protein-PII] modification enzyme</fullName>
    </alternativeName>
    <alternativeName>
        <fullName evidence="1">Bifunctional nitrogen sensor protein</fullName>
    </alternativeName>
    <domain>
        <recommendedName>
            <fullName evidence="1">[Protein-PII] uridylyltransferase</fullName>
            <shortName evidence="1">PII uridylyltransferase</shortName>
            <shortName evidence="1">UTase</shortName>
            <ecNumber evidence="1">2.7.7.59</ecNumber>
        </recommendedName>
    </domain>
    <domain>
        <recommendedName>
            <fullName evidence="1">[Protein-PII]-UMP uridylyl-removing enzyme</fullName>
            <shortName evidence="1">UR</shortName>
            <ecNumber evidence="1">3.1.4.-</ecNumber>
        </recommendedName>
    </domain>
</protein>
<sequence length="890" mass="102396">MNTLPEQYANTALPTLPGQPQNPCVWPRDELTVGGIKAHIDTFQRWLGDAFDNGISAEQLIEARTEFIDQLLQRLWIEAGFSQIADLALVAVGGYGRGELHPLSDIDLLILSRKKLPDDQAQKVGELLTLLWDVKLEVGHSVRTLEECMLEGLSDLTVATNLIESRLLIGDVALFLELQKHIFSEGFWPSDKFYAAKVEEQNQRHQRYHGTSYNLEPDIKSSPGGLRDIHTLQWVARRHFGATSLDEMVGFGFLTSAERAELNECLHILWRIRFALHLVVSRYDNRLLFDRQLSVAQRLNYSGEGNEPVERMMKDYFRVTRRVSELNQMLLQLFDEAILALPADEKPRPIDDEFQLRGTLIDLRDETLFMRQPEAILRMFYTMVRNSAITGIYSTTLRQLRHARRHLQQPLCNIPEARKLFLSILRHPGAVRRGLLPMHRHSVLGAYMPQWSHIVGQMQFDLFHAYTVDEHTIRVMLKLESFASEETRQRHPLCVDVWPRLPSTELIFIAALFHDIAKGRGGDHSILGAQDVVHFAELHGLNSRETQLVAWLVRQHLLMSVTAQRRDIQDPEVIKQFAEEVQTENRLRYLVCLTVADICATNETLWNSWKQSLLRELYFATEKQLRRGMQNTPDMRERVRHHQLQALALLRMDNIDEEALHQIWSRCRANYFVRHSPNQLAWHARHLLQHDLSKPLVLLSPQATRGGTEIFIWSPDRPYLFAAVCAELDRRNLSVHDAQIFTTRDGMAMDTFIVLEPDGSPLSADRHEVIRFGLEQVLTQSSWQPPQPRRQPAKLRHFTVETEVTFLPTHTDRKSFLELIALDQPGLLARVGKIFADLGISLHGARITTIGERVEDLFIIATADRRALNNELQQEVHQRLTEALNPNDKG</sequence>
<evidence type="ECO:0000255" key="1">
    <source>
        <dbReference type="HAMAP-Rule" id="MF_00277"/>
    </source>
</evidence>
<evidence type="ECO:0000255" key="2">
    <source>
        <dbReference type="PROSITE-ProRule" id="PRU01175"/>
    </source>
</evidence>
<accession>Q325X3</accession>
<keyword id="KW-0378">Hydrolase</keyword>
<keyword id="KW-0460">Magnesium</keyword>
<keyword id="KW-0511">Multifunctional enzyme</keyword>
<keyword id="KW-0548">Nucleotidyltransferase</keyword>
<keyword id="KW-0677">Repeat</keyword>
<keyword id="KW-0808">Transferase</keyword>
<proteinExistence type="inferred from homology"/>
<organism>
    <name type="scientific">Shigella boydii serotype 4 (strain Sb227)</name>
    <dbReference type="NCBI Taxonomy" id="300268"/>
    <lineage>
        <taxon>Bacteria</taxon>
        <taxon>Pseudomonadati</taxon>
        <taxon>Pseudomonadota</taxon>
        <taxon>Gammaproteobacteria</taxon>
        <taxon>Enterobacterales</taxon>
        <taxon>Enterobacteriaceae</taxon>
        <taxon>Shigella</taxon>
    </lineage>
</organism>
<feature type="chain" id="PRO_0000231692" description="Bifunctional uridylyltransferase/uridylyl-removing enzyme">
    <location>
        <begin position="1"/>
        <end position="890"/>
    </location>
</feature>
<feature type="domain" description="HD" evidence="2">
    <location>
        <begin position="468"/>
        <end position="590"/>
    </location>
</feature>
<feature type="domain" description="ACT 1" evidence="1">
    <location>
        <begin position="709"/>
        <end position="789"/>
    </location>
</feature>
<feature type="domain" description="ACT 2" evidence="1">
    <location>
        <begin position="816"/>
        <end position="890"/>
    </location>
</feature>
<feature type="region of interest" description="Uridylyltransferase">
    <location>
        <begin position="1"/>
        <end position="349"/>
    </location>
</feature>
<feature type="region of interest" description="Uridylyl-removing">
    <location>
        <begin position="350"/>
        <end position="708"/>
    </location>
</feature>